<evidence type="ECO:0000250" key="1"/>
<evidence type="ECO:0000255" key="2">
    <source>
        <dbReference type="PROSITE-ProRule" id="PRU00194"/>
    </source>
</evidence>
<name>WSB1_MOUSE</name>
<comment type="function">
    <text evidence="1">Probable substrate-recognition component of a SCF-like ECS (Elongin-Cullin-SOCS-box protein) E3 ubiquitin ligase complex which mediates the ubiquitination and subsequent proteasomal degradation of target proteins. Recognizes type II iodothyronine deiodinase/DIO2. Confers constitutive instability to HIPK2 through proteasomal degradation (By similarity).</text>
</comment>
<comment type="pathway">
    <text>Protein modification; protein ubiquitination.</text>
</comment>
<comment type="subunit">
    <text evidence="1">Interacts with DIO2. Component of the probable ECS(WSB1) E3 ubiquitin-protein ligase complex which contains CUL5, RNF7/RBX2, Elongin BC complex and WSB1. Component of a probable ECS-like E3 ubiquitin-protein ligase complex which contains CUL5, RBX1, Elongin BC complex and WSB1. Interacts with CUL5, RNF7, ELOB and ELOC. Binds to HIPK2 through WD40 repeats (By similarity).</text>
</comment>
<comment type="domain">
    <text evidence="1">The SOCS box domain mediates the interaction with the Elongin BC complex, an adapter module in different E3 ubiquitin ligase complexes.</text>
</comment>
<accession>O54927</accession>
<keyword id="KW-1185">Reference proteome</keyword>
<keyword id="KW-0677">Repeat</keyword>
<keyword id="KW-0833">Ubl conjugation pathway</keyword>
<keyword id="KW-0853">WD repeat</keyword>
<sequence>MASFPPRVNEKEIVRSRTIGELLAPAAPFDKKCGGENWTVAFAPDGSYFAWSQGYRIVKLVPWSQCRKNFLLHGSKNVTNSSCLKLARQNSNGGQKNKPPEHVIDCGDIVWSLAFGSSVPEKQSRCVNIEWHRFRFGQDQLLLATGLNNGRIKIWDVYTGKLLLNLVDHIEMVRDLTFAPDGSLLLVSASRDKTLRVWDLKDDGNMVKVLRAHQNWVYSCAFSPDCSMLCSVGASKAVFLWNMDKYTMIRKLEGHHHDVVACDFSPDGALLATASYDTRVYVWDPHNGDLLMEFGHLFPSPTPIFAGGANDRWVRAVSFSHDGLHVASLADDKMVRFWRIDEDCPVQVAPLSNGLCCAFSTDGSVLAAGTHDGSVYFWATPRQVPSLQHICRMSIRRVMSTQEVQKLPVPSKILAFLSYRG</sequence>
<organism>
    <name type="scientific">Mus musculus</name>
    <name type="common">Mouse</name>
    <dbReference type="NCBI Taxonomy" id="10090"/>
    <lineage>
        <taxon>Eukaryota</taxon>
        <taxon>Metazoa</taxon>
        <taxon>Chordata</taxon>
        <taxon>Craniata</taxon>
        <taxon>Vertebrata</taxon>
        <taxon>Euteleostomi</taxon>
        <taxon>Mammalia</taxon>
        <taxon>Eutheria</taxon>
        <taxon>Euarchontoglires</taxon>
        <taxon>Glires</taxon>
        <taxon>Rodentia</taxon>
        <taxon>Myomorpha</taxon>
        <taxon>Muroidea</taxon>
        <taxon>Muridae</taxon>
        <taxon>Murinae</taxon>
        <taxon>Mus</taxon>
        <taxon>Mus</taxon>
    </lineage>
</organism>
<proteinExistence type="evidence at protein level"/>
<gene>
    <name type="primary">Wsb1</name>
</gene>
<reference key="1">
    <citation type="journal article" date="1998" name="Proc. Natl. Acad. Sci. U.S.A.">
        <title>Twenty proteins containing a C-terminal SOCS box form five structural classes.</title>
        <authorList>
            <person name="Hilton D.J."/>
            <person name="Richardson R.T."/>
            <person name="Alexander W.S."/>
            <person name="Viney E.M."/>
            <person name="Willson T.A."/>
            <person name="Sprigg N.S."/>
            <person name="Starr R."/>
            <person name="Nicholson S.E."/>
            <person name="Metcalf D."/>
            <person name="Nicola N.A."/>
        </authorList>
    </citation>
    <scope>NUCLEOTIDE SEQUENCE [MRNA]</scope>
    <source>
        <strain>NIH Swiss</strain>
    </source>
</reference>
<reference key="2">
    <citation type="journal article" date="2005" name="Nat. Cell Biol.">
        <title>The Hedgehog-inducible ubiquitin ligase subunit WSB-1 modulates thyroid hormone activation and PTHrP secretion in the developing growth plate.</title>
        <authorList>
            <person name="Dentice M."/>
            <person name="Bandyopadhyay A."/>
            <person name="Gereben B."/>
            <person name="Callebaut I."/>
            <person name="Christoffolete M.A."/>
            <person name="Kim B.W."/>
            <person name="Nissim S."/>
            <person name="Mornon J.P."/>
            <person name="Zavacki A.M."/>
            <person name="Zeold A."/>
            <person name="Capelo L.P."/>
            <person name="Curcio-Morelli C."/>
            <person name="Ribeiro R."/>
            <person name="Harney J.W."/>
            <person name="Tabin C.J."/>
            <person name="Bianco A.C."/>
        </authorList>
    </citation>
    <scope>INTERACTION WITH DIO2</scope>
</reference>
<dbReference type="EMBL" id="AF033186">
    <property type="protein sequence ID" value="AAB96647.1"/>
    <property type="molecule type" value="mRNA"/>
</dbReference>
<dbReference type="CCDS" id="CCDS25118.1"/>
<dbReference type="RefSeq" id="NP_062627.3">
    <property type="nucleotide sequence ID" value="NM_019653.3"/>
</dbReference>
<dbReference type="SMR" id="O54927"/>
<dbReference type="BioGRID" id="219684">
    <property type="interactions" value="15"/>
</dbReference>
<dbReference type="FunCoup" id="O54927">
    <property type="interactions" value="1272"/>
</dbReference>
<dbReference type="IntAct" id="O54927">
    <property type="interactions" value="7"/>
</dbReference>
<dbReference type="STRING" id="10090.ENSMUSP00000017821"/>
<dbReference type="GlyGen" id="O54927">
    <property type="glycosylation" value="1 site"/>
</dbReference>
<dbReference type="iPTMnet" id="O54927"/>
<dbReference type="PhosphoSitePlus" id="O54927"/>
<dbReference type="PaxDb" id="10090-ENSMUSP00000017821"/>
<dbReference type="ProteomicsDB" id="299775"/>
<dbReference type="Antibodypedia" id="1139">
    <property type="antibodies" value="152 antibodies from 23 providers"/>
</dbReference>
<dbReference type="DNASU" id="78889"/>
<dbReference type="Ensembl" id="ENSMUST00000017821.12">
    <property type="protein sequence ID" value="ENSMUSP00000017821.6"/>
    <property type="gene ID" value="ENSMUSG00000017677.12"/>
</dbReference>
<dbReference type="GeneID" id="78889"/>
<dbReference type="KEGG" id="mmu:78889"/>
<dbReference type="UCSC" id="uc007kki.1">
    <property type="organism name" value="mouse"/>
</dbReference>
<dbReference type="AGR" id="MGI:1926139"/>
<dbReference type="CTD" id="26118"/>
<dbReference type="MGI" id="MGI:1926139">
    <property type="gene designation" value="Wsb1"/>
</dbReference>
<dbReference type="VEuPathDB" id="HostDB:ENSMUSG00000017677"/>
<dbReference type="eggNOG" id="KOG0266">
    <property type="taxonomic scope" value="Eukaryota"/>
</dbReference>
<dbReference type="GeneTree" id="ENSGT00890000139406"/>
<dbReference type="HOGENOM" id="CLU_056876_0_0_1"/>
<dbReference type="InParanoid" id="O54927"/>
<dbReference type="OMA" id="YVWDPHT"/>
<dbReference type="OrthoDB" id="538223at2759"/>
<dbReference type="PhylomeDB" id="O54927"/>
<dbReference type="TreeFam" id="TF329216"/>
<dbReference type="Reactome" id="R-MMU-8951664">
    <property type="pathway name" value="Neddylation"/>
</dbReference>
<dbReference type="Reactome" id="R-MMU-983168">
    <property type="pathway name" value="Antigen processing: Ubiquitination &amp; Proteasome degradation"/>
</dbReference>
<dbReference type="UniPathway" id="UPA00143"/>
<dbReference type="BioGRID-ORCS" id="78889">
    <property type="hits" value="3 hits in 79 CRISPR screens"/>
</dbReference>
<dbReference type="ChiTaRS" id="Wsb1">
    <property type="organism name" value="mouse"/>
</dbReference>
<dbReference type="PRO" id="PR:O54927"/>
<dbReference type="Proteomes" id="UP000000589">
    <property type="component" value="Chromosome 11"/>
</dbReference>
<dbReference type="RNAct" id="O54927">
    <property type="molecule type" value="protein"/>
</dbReference>
<dbReference type="Bgee" id="ENSMUSG00000017677">
    <property type="expression patterns" value="Expressed in embryonic brain and 270 other cell types or tissues"/>
</dbReference>
<dbReference type="ExpressionAtlas" id="O54927">
    <property type="expression patterns" value="baseline and differential"/>
</dbReference>
<dbReference type="GO" id="GO:0005737">
    <property type="term" value="C:cytoplasm"/>
    <property type="evidence" value="ECO:0000314"/>
    <property type="project" value="MGI"/>
</dbReference>
<dbReference type="GO" id="GO:0061630">
    <property type="term" value="F:ubiquitin protein ligase activity"/>
    <property type="evidence" value="ECO:0000314"/>
    <property type="project" value="MGI"/>
</dbReference>
<dbReference type="GO" id="GO:0035556">
    <property type="term" value="P:intracellular signal transduction"/>
    <property type="evidence" value="ECO:0007669"/>
    <property type="project" value="InterPro"/>
</dbReference>
<dbReference type="GO" id="GO:0140454">
    <property type="term" value="P:protein aggregate center assembly"/>
    <property type="evidence" value="ECO:0000314"/>
    <property type="project" value="MGI"/>
</dbReference>
<dbReference type="GO" id="GO:0044314">
    <property type="term" value="P:protein K27-linked ubiquitination"/>
    <property type="evidence" value="ECO:0000314"/>
    <property type="project" value="MGI"/>
</dbReference>
<dbReference type="CDD" id="cd00200">
    <property type="entry name" value="WD40"/>
    <property type="match status" value="1"/>
</dbReference>
<dbReference type="FunFam" id="2.130.10.10:FF:000588">
    <property type="entry name" value="WD repeat and SOCS box-containing 1, isoform CRA_b"/>
    <property type="match status" value="1"/>
</dbReference>
<dbReference type="Gene3D" id="1.10.750.20">
    <property type="entry name" value="SOCS box"/>
    <property type="match status" value="1"/>
</dbReference>
<dbReference type="Gene3D" id="2.130.10.10">
    <property type="entry name" value="YVTN repeat-like/Quinoprotein amine dehydrogenase"/>
    <property type="match status" value="2"/>
</dbReference>
<dbReference type="InterPro" id="IPR020472">
    <property type="entry name" value="G-protein_beta_WD-40_rep"/>
</dbReference>
<dbReference type="InterPro" id="IPR001496">
    <property type="entry name" value="SOCS_box"/>
</dbReference>
<dbReference type="InterPro" id="IPR036036">
    <property type="entry name" value="SOCS_box-like_dom_sf"/>
</dbReference>
<dbReference type="InterPro" id="IPR015943">
    <property type="entry name" value="WD40/YVTN_repeat-like_dom_sf"/>
</dbReference>
<dbReference type="InterPro" id="IPR019775">
    <property type="entry name" value="WD40_repeat_CS"/>
</dbReference>
<dbReference type="InterPro" id="IPR036322">
    <property type="entry name" value="WD40_repeat_dom_sf"/>
</dbReference>
<dbReference type="InterPro" id="IPR001680">
    <property type="entry name" value="WD40_rpt"/>
</dbReference>
<dbReference type="InterPro" id="IPR051983">
    <property type="entry name" value="WSB_SOCS-box_domain"/>
</dbReference>
<dbReference type="PANTHER" id="PTHR15622:SF12">
    <property type="entry name" value="WD REPEAT AND SOCS BOX-CONTAINING PROTEIN 1"/>
    <property type="match status" value="1"/>
</dbReference>
<dbReference type="PANTHER" id="PTHR15622">
    <property type="entry name" value="WD40 REPEAT PROTEIN"/>
    <property type="match status" value="1"/>
</dbReference>
<dbReference type="Pfam" id="PF07525">
    <property type="entry name" value="SOCS_box"/>
    <property type="match status" value="1"/>
</dbReference>
<dbReference type="Pfam" id="PF00400">
    <property type="entry name" value="WD40"/>
    <property type="match status" value="5"/>
</dbReference>
<dbReference type="PRINTS" id="PR00320">
    <property type="entry name" value="GPROTEINBRPT"/>
</dbReference>
<dbReference type="SMART" id="SM00253">
    <property type="entry name" value="SOCS"/>
    <property type="match status" value="1"/>
</dbReference>
<dbReference type="SMART" id="SM00969">
    <property type="entry name" value="SOCS_box"/>
    <property type="match status" value="1"/>
</dbReference>
<dbReference type="SMART" id="SM00320">
    <property type="entry name" value="WD40"/>
    <property type="match status" value="6"/>
</dbReference>
<dbReference type="SUPFAM" id="SSF158235">
    <property type="entry name" value="SOCS box-like"/>
    <property type="match status" value="1"/>
</dbReference>
<dbReference type="SUPFAM" id="SSF50978">
    <property type="entry name" value="WD40 repeat-like"/>
    <property type="match status" value="1"/>
</dbReference>
<dbReference type="PROSITE" id="PS50225">
    <property type="entry name" value="SOCS"/>
    <property type="match status" value="1"/>
</dbReference>
<dbReference type="PROSITE" id="PS00678">
    <property type="entry name" value="WD_REPEATS_1"/>
    <property type="match status" value="2"/>
</dbReference>
<dbReference type="PROSITE" id="PS50082">
    <property type="entry name" value="WD_REPEATS_2"/>
    <property type="match status" value="6"/>
</dbReference>
<dbReference type="PROSITE" id="PS50294">
    <property type="entry name" value="WD_REPEATS_REGION"/>
    <property type="match status" value="1"/>
</dbReference>
<feature type="chain" id="PRO_0000051458" description="WD repeat and SOCS box-containing protein 1">
    <location>
        <begin position="1"/>
        <end position="421"/>
    </location>
</feature>
<feature type="repeat" description="WD 1">
    <location>
        <begin position="124"/>
        <end position="165"/>
    </location>
</feature>
<feature type="repeat" description="WD 2">
    <location>
        <begin position="168"/>
        <end position="208"/>
    </location>
</feature>
<feature type="repeat" description="WD 3">
    <location>
        <begin position="212"/>
        <end position="251"/>
    </location>
</feature>
<feature type="repeat" description="WD 4">
    <location>
        <begin position="254"/>
        <end position="293"/>
    </location>
</feature>
<feature type="repeat" description="WD 5">
    <location>
        <begin position="309"/>
        <end position="346"/>
    </location>
</feature>
<feature type="domain" description="SOCS box" evidence="2">
    <location>
        <begin position="372"/>
        <end position="421"/>
    </location>
</feature>
<protein>
    <recommendedName>
        <fullName>WD repeat and SOCS box-containing protein 1</fullName>
        <shortName>WSB-1</shortName>
    </recommendedName>
</protein>